<keyword id="KW-0131">Cell cycle</keyword>
<keyword id="KW-0132">Cell division</keyword>
<keyword id="KW-0238">DNA-binding</keyword>
<feature type="chain" id="PRO_1000200994" description="Cell division activator CedA">
    <location>
        <begin position="1"/>
        <end position="80"/>
    </location>
</feature>
<evidence type="ECO:0000255" key="1">
    <source>
        <dbReference type="HAMAP-Rule" id="MF_01580"/>
    </source>
</evidence>
<organism>
    <name type="scientific">Salmonella newport (strain SL254)</name>
    <dbReference type="NCBI Taxonomy" id="423368"/>
    <lineage>
        <taxon>Bacteria</taxon>
        <taxon>Pseudomonadati</taxon>
        <taxon>Pseudomonadota</taxon>
        <taxon>Gammaproteobacteria</taxon>
        <taxon>Enterobacterales</taxon>
        <taxon>Enterobacteriaceae</taxon>
        <taxon>Salmonella</taxon>
    </lineage>
</organism>
<sequence>MMKPLRQQNRQIISYIPRVEPAPPEHAIKMDTFRDVWILRGKYVAFVLTGESFQRSPAFSVPESAQRWANQVRQENEIAD</sequence>
<proteinExistence type="inferred from homology"/>
<protein>
    <recommendedName>
        <fullName evidence="1">Cell division activator CedA</fullName>
    </recommendedName>
</protein>
<name>CEDA_SALNS</name>
<gene>
    <name evidence="1" type="primary">cedA</name>
    <name type="ordered locus">SNSL254_A1433</name>
</gene>
<dbReference type="EMBL" id="CP001113">
    <property type="protein sequence ID" value="ACF63321.1"/>
    <property type="molecule type" value="Genomic_DNA"/>
</dbReference>
<dbReference type="RefSeq" id="WP_000977510.1">
    <property type="nucleotide sequence ID" value="NZ_CCMR01000003.1"/>
</dbReference>
<dbReference type="SMR" id="B4T4L7"/>
<dbReference type="KEGG" id="see:SNSL254_A1433"/>
<dbReference type="HOGENOM" id="CLU_167445_0_0_6"/>
<dbReference type="Proteomes" id="UP000008824">
    <property type="component" value="Chromosome"/>
</dbReference>
<dbReference type="GO" id="GO:0003677">
    <property type="term" value="F:DNA binding"/>
    <property type="evidence" value="ECO:0007669"/>
    <property type="project" value="UniProtKB-UniRule"/>
</dbReference>
<dbReference type="GO" id="GO:0051301">
    <property type="term" value="P:cell division"/>
    <property type="evidence" value="ECO:0007669"/>
    <property type="project" value="UniProtKB-UniRule"/>
</dbReference>
<dbReference type="Gene3D" id="3.30.730.20">
    <property type="entry name" value="Cell division activator CedA"/>
    <property type="match status" value="1"/>
</dbReference>
<dbReference type="HAMAP" id="MF_01580">
    <property type="entry name" value="CedA"/>
    <property type="match status" value="1"/>
</dbReference>
<dbReference type="InterPro" id="IPR038463">
    <property type="entry name" value="CedA-like_sf"/>
</dbReference>
<dbReference type="InterPro" id="IPR019666">
    <property type="entry name" value="Cell_div_activator_CedA"/>
</dbReference>
<dbReference type="NCBIfam" id="NF007510">
    <property type="entry name" value="PRK10113.1"/>
    <property type="match status" value="1"/>
</dbReference>
<dbReference type="Pfam" id="PF10729">
    <property type="entry name" value="CedA"/>
    <property type="match status" value="1"/>
</dbReference>
<reference key="1">
    <citation type="journal article" date="2011" name="J. Bacteriol.">
        <title>Comparative genomics of 28 Salmonella enterica isolates: evidence for CRISPR-mediated adaptive sublineage evolution.</title>
        <authorList>
            <person name="Fricke W.F."/>
            <person name="Mammel M.K."/>
            <person name="McDermott P.F."/>
            <person name="Tartera C."/>
            <person name="White D.G."/>
            <person name="Leclerc J.E."/>
            <person name="Ravel J."/>
            <person name="Cebula T.A."/>
        </authorList>
    </citation>
    <scope>NUCLEOTIDE SEQUENCE [LARGE SCALE GENOMIC DNA]</scope>
    <source>
        <strain>SL254</strain>
    </source>
</reference>
<accession>B4T4L7</accession>
<comment type="function">
    <text evidence="1">Activates the cell division inhibited by chromosomal DNA over-replication.</text>
</comment>
<comment type="similarity">
    <text evidence="1">Belongs to the CedA family.</text>
</comment>